<gene>
    <name type="primary">alr</name>
    <name type="ordered locus">PEPE_1559</name>
</gene>
<name>ALR_PEDPA</name>
<protein>
    <recommendedName>
        <fullName evidence="1">Alanine racemase</fullName>
        <ecNumber evidence="1">5.1.1.1</ecNumber>
    </recommendedName>
</protein>
<proteinExistence type="inferred from homology"/>
<feature type="chain" id="PRO_1000066021" description="Alanine racemase">
    <location>
        <begin position="1"/>
        <end position="374"/>
    </location>
</feature>
<feature type="active site" description="Proton acceptor; specific for D-alanine" evidence="1">
    <location>
        <position position="40"/>
    </location>
</feature>
<feature type="active site" description="Proton acceptor; specific for L-alanine" evidence="1">
    <location>
        <position position="264"/>
    </location>
</feature>
<feature type="binding site" evidence="1">
    <location>
        <position position="136"/>
    </location>
    <ligand>
        <name>substrate</name>
    </ligand>
</feature>
<feature type="binding site" evidence="1">
    <location>
        <position position="311"/>
    </location>
    <ligand>
        <name>substrate</name>
    </ligand>
</feature>
<feature type="modified residue" description="N6-(pyridoxal phosphate)lysine" evidence="1">
    <location>
        <position position="40"/>
    </location>
</feature>
<sequence length="374" mass="41263">MVVGIHRPSKLVINAEAIRNNVKNEISRLDGHSELFAVVKANGYGHGIVETAQFTKQAGATGFCVAILDEALALRDAGLTETILVLGITDVKYAKLAAENDISLTVGDQAWLDEATQILNQKPLKVHLGIDTGMGRIGFQDGASFKKAADYLEQSQQFNFEGVFTHFATADEKDTTYFNLQVERFNHFISQLTRRPRYVHVSNTATSLWHAACNGNMIRFGVGIYGMNPSGKTLESPFDLQPAMSLESELSFSKLVQKGRSISYGATYTAEEDEWIGTIPIGYADGYERRLQGFHVLIDGQFCEIVGRICMDQMMVRLPKSYPVGTKVILAGKSGEKSITMTDIAEYAGTINYEITCGFTQRLPRIYTENGVVN</sequence>
<accession>Q03DZ2</accession>
<keyword id="KW-0413">Isomerase</keyword>
<keyword id="KW-0663">Pyridoxal phosphate</keyword>
<dbReference type="EC" id="5.1.1.1" evidence="1"/>
<dbReference type="EMBL" id="CP000422">
    <property type="protein sequence ID" value="ABJ68580.1"/>
    <property type="molecule type" value="Genomic_DNA"/>
</dbReference>
<dbReference type="RefSeq" id="WP_011673726.1">
    <property type="nucleotide sequence ID" value="NC_008525.1"/>
</dbReference>
<dbReference type="SMR" id="Q03DZ2"/>
<dbReference type="STRING" id="278197.PEPE_1559"/>
<dbReference type="GeneID" id="33062411"/>
<dbReference type="KEGG" id="ppe:PEPE_1559"/>
<dbReference type="eggNOG" id="COG0787">
    <property type="taxonomic scope" value="Bacteria"/>
</dbReference>
<dbReference type="HOGENOM" id="CLU_028393_2_1_9"/>
<dbReference type="OrthoDB" id="9813814at2"/>
<dbReference type="UniPathway" id="UPA00042">
    <property type="reaction ID" value="UER00497"/>
</dbReference>
<dbReference type="Proteomes" id="UP000000773">
    <property type="component" value="Chromosome"/>
</dbReference>
<dbReference type="GO" id="GO:0005829">
    <property type="term" value="C:cytosol"/>
    <property type="evidence" value="ECO:0007669"/>
    <property type="project" value="TreeGrafter"/>
</dbReference>
<dbReference type="GO" id="GO:0008784">
    <property type="term" value="F:alanine racemase activity"/>
    <property type="evidence" value="ECO:0007669"/>
    <property type="project" value="UniProtKB-UniRule"/>
</dbReference>
<dbReference type="GO" id="GO:0030170">
    <property type="term" value="F:pyridoxal phosphate binding"/>
    <property type="evidence" value="ECO:0007669"/>
    <property type="project" value="UniProtKB-UniRule"/>
</dbReference>
<dbReference type="GO" id="GO:0030632">
    <property type="term" value="P:D-alanine biosynthetic process"/>
    <property type="evidence" value="ECO:0007669"/>
    <property type="project" value="UniProtKB-UniRule"/>
</dbReference>
<dbReference type="GO" id="GO:0009252">
    <property type="term" value="P:peptidoglycan biosynthetic process"/>
    <property type="evidence" value="ECO:0007669"/>
    <property type="project" value="TreeGrafter"/>
</dbReference>
<dbReference type="CDD" id="cd00430">
    <property type="entry name" value="PLPDE_III_AR"/>
    <property type="match status" value="1"/>
</dbReference>
<dbReference type="FunFam" id="2.40.37.10:FF:000006">
    <property type="entry name" value="Alanine racemase"/>
    <property type="match status" value="1"/>
</dbReference>
<dbReference type="FunFam" id="3.20.20.10:FF:000002">
    <property type="entry name" value="Alanine racemase"/>
    <property type="match status" value="1"/>
</dbReference>
<dbReference type="Gene3D" id="3.20.20.10">
    <property type="entry name" value="Alanine racemase"/>
    <property type="match status" value="1"/>
</dbReference>
<dbReference type="Gene3D" id="2.40.37.10">
    <property type="entry name" value="Lyase, Ornithine Decarboxylase, Chain A, domain 1"/>
    <property type="match status" value="1"/>
</dbReference>
<dbReference type="HAMAP" id="MF_01201">
    <property type="entry name" value="Ala_racemase"/>
    <property type="match status" value="1"/>
</dbReference>
<dbReference type="InterPro" id="IPR000821">
    <property type="entry name" value="Ala_racemase"/>
</dbReference>
<dbReference type="InterPro" id="IPR009006">
    <property type="entry name" value="Ala_racemase/Decarboxylase_C"/>
</dbReference>
<dbReference type="InterPro" id="IPR011079">
    <property type="entry name" value="Ala_racemase_C"/>
</dbReference>
<dbReference type="InterPro" id="IPR001608">
    <property type="entry name" value="Ala_racemase_N"/>
</dbReference>
<dbReference type="InterPro" id="IPR020622">
    <property type="entry name" value="Ala_racemase_pyridoxalP-BS"/>
</dbReference>
<dbReference type="InterPro" id="IPR029066">
    <property type="entry name" value="PLP-binding_barrel"/>
</dbReference>
<dbReference type="NCBIfam" id="TIGR00492">
    <property type="entry name" value="alr"/>
    <property type="match status" value="1"/>
</dbReference>
<dbReference type="PANTHER" id="PTHR30511">
    <property type="entry name" value="ALANINE RACEMASE"/>
    <property type="match status" value="1"/>
</dbReference>
<dbReference type="PANTHER" id="PTHR30511:SF0">
    <property type="entry name" value="ALANINE RACEMASE, CATABOLIC-RELATED"/>
    <property type="match status" value="1"/>
</dbReference>
<dbReference type="Pfam" id="PF00842">
    <property type="entry name" value="Ala_racemase_C"/>
    <property type="match status" value="1"/>
</dbReference>
<dbReference type="Pfam" id="PF01168">
    <property type="entry name" value="Ala_racemase_N"/>
    <property type="match status" value="1"/>
</dbReference>
<dbReference type="PRINTS" id="PR00992">
    <property type="entry name" value="ALARACEMASE"/>
</dbReference>
<dbReference type="SMART" id="SM01005">
    <property type="entry name" value="Ala_racemase_C"/>
    <property type="match status" value="1"/>
</dbReference>
<dbReference type="SUPFAM" id="SSF50621">
    <property type="entry name" value="Alanine racemase C-terminal domain-like"/>
    <property type="match status" value="1"/>
</dbReference>
<dbReference type="SUPFAM" id="SSF51419">
    <property type="entry name" value="PLP-binding barrel"/>
    <property type="match status" value="1"/>
</dbReference>
<dbReference type="PROSITE" id="PS00395">
    <property type="entry name" value="ALANINE_RACEMASE"/>
    <property type="match status" value="1"/>
</dbReference>
<evidence type="ECO:0000255" key="1">
    <source>
        <dbReference type="HAMAP-Rule" id="MF_01201"/>
    </source>
</evidence>
<reference key="1">
    <citation type="journal article" date="2006" name="Proc. Natl. Acad. Sci. U.S.A.">
        <title>Comparative genomics of the lactic acid bacteria.</title>
        <authorList>
            <person name="Makarova K.S."/>
            <person name="Slesarev A."/>
            <person name="Wolf Y.I."/>
            <person name="Sorokin A."/>
            <person name="Mirkin B."/>
            <person name="Koonin E.V."/>
            <person name="Pavlov A."/>
            <person name="Pavlova N."/>
            <person name="Karamychev V."/>
            <person name="Polouchine N."/>
            <person name="Shakhova V."/>
            <person name="Grigoriev I."/>
            <person name="Lou Y."/>
            <person name="Rohksar D."/>
            <person name="Lucas S."/>
            <person name="Huang K."/>
            <person name="Goodstein D.M."/>
            <person name="Hawkins T."/>
            <person name="Plengvidhya V."/>
            <person name="Welker D."/>
            <person name="Hughes J."/>
            <person name="Goh Y."/>
            <person name="Benson A."/>
            <person name="Baldwin K."/>
            <person name="Lee J.-H."/>
            <person name="Diaz-Muniz I."/>
            <person name="Dosti B."/>
            <person name="Smeianov V."/>
            <person name="Wechter W."/>
            <person name="Barabote R."/>
            <person name="Lorca G."/>
            <person name="Altermann E."/>
            <person name="Barrangou R."/>
            <person name="Ganesan B."/>
            <person name="Xie Y."/>
            <person name="Rawsthorne H."/>
            <person name="Tamir D."/>
            <person name="Parker C."/>
            <person name="Breidt F."/>
            <person name="Broadbent J.R."/>
            <person name="Hutkins R."/>
            <person name="O'Sullivan D."/>
            <person name="Steele J."/>
            <person name="Unlu G."/>
            <person name="Saier M.H. Jr."/>
            <person name="Klaenhammer T."/>
            <person name="Richardson P."/>
            <person name="Kozyavkin S."/>
            <person name="Weimer B.C."/>
            <person name="Mills D.A."/>
        </authorList>
    </citation>
    <scope>NUCLEOTIDE SEQUENCE [LARGE SCALE GENOMIC DNA]</scope>
    <source>
        <strain>ATCC 25745 / CCUG 21536 / LMG 10740 / 183-1w</strain>
    </source>
</reference>
<organism>
    <name type="scientific">Pediococcus pentosaceus (strain ATCC 25745 / CCUG 21536 / LMG 10740 / 183-1w)</name>
    <dbReference type="NCBI Taxonomy" id="278197"/>
    <lineage>
        <taxon>Bacteria</taxon>
        <taxon>Bacillati</taxon>
        <taxon>Bacillota</taxon>
        <taxon>Bacilli</taxon>
        <taxon>Lactobacillales</taxon>
        <taxon>Lactobacillaceae</taxon>
        <taxon>Pediococcus</taxon>
    </lineage>
</organism>
<comment type="function">
    <text evidence="1">Catalyzes the interconversion of L-alanine and D-alanine. May also act on other amino acids.</text>
</comment>
<comment type="catalytic activity">
    <reaction evidence="1">
        <text>L-alanine = D-alanine</text>
        <dbReference type="Rhea" id="RHEA:20249"/>
        <dbReference type="ChEBI" id="CHEBI:57416"/>
        <dbReference type="ChEBI" id="CHEBI:57972"/>
        <dbReference type="EC" id="5.1.1.1"/>
    </reaction>
</comment>
<comment type="cofactor">
    <cofactor evidence="1">
        <name>pyridoxal 5'-phosphate</name>
        <dbReference type="ChEBI" id="CHEBI:597326"/>
    </cofactor>
</comment>
<comment type="pathway">
    <text evidence="1">Amino-acid biosynthesis; D-alanine biosynthesis; D-alanine from L-alanine: step 1/1.</text>
</comment>
<comment type="similarity">
    <text evidence="1">Belongs to the alanine racemase family.</text>
</comment>